<dbReference type="EC" id="2.7.8.7" evidence="1"/>
<dbReference type="EMBL" id="CP000384">
    <property type="protein sequence ID" value="ABG09754.1"/>
    <property type="molecule type" value="Genomic_DNA"/>
</dbReference>
<dbReference type="SMR" id="Q1B5T0"/>
<dbReference type="KEGG" id="mmc:Mmcs_3647"/>
<dbReference type="HOGENOM" id="CLU_089696_2_0_11"/>
<dbReference type="BioCyc" id="MSP164756:G1G6O-3724-MONOMER"/>
<dbReference type="GO" id="GO:0005737">
    <property type="term" value="C:cytoplasm"/>
    <property type="evidence" value="ECO:0007669"/>
    <property type="project" value="UniProtKB-SubCell"/>
</dbReference>
<dbReference type="GO" id="GO:0008897">
    <property type="term" value="F:holo-[acyl-carrier-protein] synthase activity"/>
    <property type="evidence" value="ECO:0007669"/>
    <property type="project" value="UniProtKB-UniRule"/>
</dbReference>
<dbReference type="GO" id="GO:0000287">
    <property type="term" value="F:magnesium ion binding"/>
    <property type="evidence" value="ECO:0007669"/>
    <property type="project" value="UniProtKB-UniRule"/>
</dbReference>
<dbReference type="GO" id="GO:0006633">
    <property type="term" value="P:fatty acid biosynthetic process"/>
    <property type="evidence" value="ECO:0007669"/>
    <property type="project" value="UniProtKB-UniRule"/>
</dbReference>
<dbReference type="Gene3D" id="3.90.470.20">
    <property type="entry name" value="4'-phosphopantetheinyl transferase domain"/>
    <property type="match status" value="1"/>
</dbReference>
<dbReference type="HAMAP" id="MF_00101">
    <property type="entry name" value="AcpS"/>
    <property type="match status" value="1"/>
</dbReference>
<dbReference type="InterPro" id="IPR008278">
    <property type="entry name" value="4-PPantetheinyl_Trfase_dom"/>
</dbReference>
<dbReference type="InterPro" id="IPR037143">
    <property type="entry name" value="4-PPantetheinyl_Trfase_dom_sf"/>
</dbReference>
<dbReference type="InterPro" id="IPR002582">
    <property type="entry name" value="ACPS"/>
</dbReference>
<dbReference type="InterPro" id="IPR004568">
    <property type="entry name" value="Ppantetheine-prot_Trfase_dom"/>
</dbReference>
<dbReference type="NCBIfam" id="TIGR00516">
    <property type="entry name" value="acpS"/>
    <property type="match status" value="1"/>
</dbReference>
<dbReference type="NCBIfam" id="TIGR00556">
    <property type="entry name" value="pantethn_trn"/>
    <property type="match status" value="1"/>
</dbReference>
<dbReference type="NCBIfam" id="NF000831">
    <property type="entry name" value="PRK00070.3-1"/>
    <property type="match status" value="1"/>
</dbReference>
<dbReference type="Pfam" id="PF01648">
    <property type="entry name" value="ACPS"/>
    <property type="match status" value="1"/>
</dbReference>
<dbReference type="SUPFAM" id="SSF56214">
    <property type="entry name" value="4'-phosphopantetheinyl transferase"/>
    <property type="match status" value="1"/>
</dbReference>
<reference key="1">
    <citation type="submission" date="2006-06" db="EMBL/GenBank/DDBJ databases">
        <title>Complete sequence of chromosome of Mycobacterium sp. MCS.</title>
        <authorList>
            <consortium name="US DOE Joint Genome Institute"/>
            <person name="Copeland A."/>
            <person name="Lucas S."/>
            <person name="Lapidus A."/>
            <person name="Barry K."/>
            <person name="Detter J.C."/>
            <person name="Glavina del Rio T."/>
            <person name="Hammon N."/>
            <person name="Israni S."/>
            <person name="Dalin E."/>
            <person name="Tice H."/>
            <person name="Pitluck S."/>
            <person name="Martinez M."/>
            <person name="Schmutz J."/>
            <person name="Larimer F."/>
            <person name="Land M."/>
            <person name="Hauser L."/>
            <person name="Kyrpides N."/>
            <person name="Kim E."/>
            <person name="Miller C.D."/>
            <person name="Hughes J.E."/>
            <person name="Anderson A.J."/>
            <person name="Sims R.C."/>
            <person name="Richardson P."/>
        </authorList>
    </citation>
    <scope>NUCLEOTIDE SEQUENCE [LARGE SCALE GENOMIC DNA]</scope>
    <source>
        <strain>MCS</strain>
    </source>
</reference>
<gene>
    <name evidence="1" type="primary">acpS</name>
    <name type="ordered locus">Mmcs_3647</name>
</gene>
<keyword id="KW-0963">Cytoplasm</keyword>
<keyword id="KW-0275">Fatty acid biosynthesis</keyword>
<keyword id="KW-0276">Fatty acid metabolism</keyword>
<keyword id="KW-0444">Lipid biosynthesis</keyword>
<keyword id="KW-0443">Lipid metabolism</keyword>
<keyword id="KW-0460">Magnesium</keyword>
<keyword id="KW-0479">Metal-binding</keyword>
<keyword id="KW-0808">Transferase</keyword>
<sequence length="130" mass="14048">MAIVGVGIDLVSIPDFAEQVDRPGTVFAETFTPGERRDAADKSSSAARHLAARWAAKEAVIKAWSGSRFAKRPALPEGIHRDIEVVTDMWGRPKVRLTGDIAEHLREATIHVSLTHEGDTAAAVAVIEEP</sequence>
<protein>
    <recommendedName>
        <fullName evidence="1">Holo-[acyl-carrier-protein] synthase</fullName>
        <shortName evidence="1">Holo-ACP synthase</shortName>
        <ecNumber evidence="1">2.7.8.7</ecNumber>
    </recommendedName>
    <alternativeName>
        <fullName evidence="1">4'-phosphopantetheinyl transferase AcpS</fullName>
    </alternativeName>
</protein>
<proteinExistence type="inferred from homology"/>
<feature type="chain" id="PRO_1000008457" description="Holo-[acyl-carrier-protein] synthase">
    <location>
        <begin position="1"/>
        <end position="130"/>
    </location>
</feature>
<feature type="binding site" evidence="1">
    <location>
        <position position="9"/>
    </location>
    <ligand>
        <name>Mg(2+)</name>
        <dbReference type="ChEBI" id="CHEBI:18420"/>
    </ligand>
</feature>
<feature type="binding site" evidence="1">
    <location>
        <position position="58"/>
    </location>
    <ligand>
        <name>Mg(2+)</name>
        <dbReference type="ChEBI" id="CHEBI:18420"/>
    </ligand>
</feature>
<accession>Q1B5T0</accession>
<name>ACPS_MYCSS</name>
<evidence type="ECO:0000255" key="1">
    <source>
        <dbReference type="HAMAP-Rule" id="MF_00101"/>
    </source>
</evidence>
<organism>
    <name type="scientific">Mycobacterium sp. (strain MCS)</name>
    <dbReference type="NCBI Taxonomy" id="164756"/>
    <lineage>
        <taxon>Bacteria</taxon>
        <taxon>Bacillati</taxon>
        <taxon>Actinomycetota</taxon>
        <taxon>Actinomycetes</taxon>
        <taxon>Mycobacteriales</taxon>
        <taxon>Mycobacteriaceae</taxon>
        <taxon>Mycobacterium</taxon>
    </lineage>
</organism>
<comment type="function">
    <text evidence="1">Transfers the 4'-phosphopantetheine moiety from coenzyme A to a Ser of acyl-carrier-protein.</text>
</comment>
<comment type="catalytic activity">
    <reaction evidence="1">
        <text>apo-[ACP] + CoA = holo-[ACP] + adenosine 3',5'-bisphosphate + H(+)</text>
        <dbReference type="Rhea" id="RHEA:12068"/>
        <dbReference type="Rhea" id="RHEA-COMP:9685"/>
        <dbReference type="Rhea" id="RHEA-COMP:9690"/>
        <dbReference type="ChEBI" id="CHEBI:15378"/>
        <dbReference type="ChEBI" id="CHEBI:29999"/>
        <dbReference type="ChEBI" id="CHEBI:57287"/>
        <dbReference type="ChEBI" id="CHEBI:58343"/>
        <dbReference type="ChEBI" id="CHEBI:64479"/>
        <dbReference type="EC" id="2.7.8.7"/>
    </reaction>
</comment>
<comment type="cofactor">
    <cofactor evidence="1">
        <name>Mg(2+)</name>
        <dbReference type="ChEBI" id="CHEBI:18420"/>
    </cofactor>
</comment>
<comment type="subcellular location">
    <subcellularLocation>
        <location evidence="1">Cytoplasm</location>
    </subcellularLocation>
</comment>
<comment type="similarity">
    <text evidence="1">Belongs to the P-Pant transferase superfamily. AcpS family.</text>
</comment>